<feature type="chain" id="PRO_0000184416" description="T-box transcription factor T">
    <location>
        <begin position="1"/>
        <end position="433"/>
    </location>
</feature>
<feature type="DNA-binding region" description="T-box" evidence="4">
    <location>
        <begin position="49"/>
        <end position="217"/>
    </location>
</feature>
<feature type="sequence conflict" description="In Ref. 3." evidence="5" ref="3">
    <original>A</original>
    <variation>T</variation>
    <location>
        <position position="250"/>
    </location>
</feature>
<evidence type="ECO:0000250" key="1"/>
<evidence type="ECO:0000250" key="2">
    <source>
        <dbReference type="UniProtKB" id="O15178"/>
    </source>
</evidence>
<evidence type="ECO:0000250" key="3">
    <source>
        <dbReference type="UniProtKB" id="P20293"/>
    </source>
</evidence>
<evidence type="ECO:0000255" key="4">
    <source>
        <dbReference type="PROSITE-ProRule" id="PRU00201"/>
    </source>
</evidence>
<evidence type="ECO:0000305" key="5"/>
<reference key="1">
    <citation type="journal article" date="1995" name="Dev. Biol.">
        <title>The chick Brachyury gene: developmental expression pattern and response to axial induction by localized activin.</title>
        <authorList>
            <person name="Kispert A."/>
            <person name="Ortner H."/>
            <person name="Cooke J."/>
            <person name="Herrmann B.G."/>
        </authorList>
    </citation>
    <scope>NUCLEOTIDE SEQUENCE [MRNA]</scope>
    <source>
        <tissue>Embryo</tissue>
    </source>
</reference>
<reference key="2">
    <citation type="journal article" date="1997" name="Development">
        <title>Two novel chick T-box genes related to mouse Brachyury are expressed in different, non-overlapping mesodermal domains during gastrulation.</title>
        <authorList>
            <person name="Knezevic V."/>
            <person name="de Santo R."/>
            <person name="Mackem S."/>
        </authorList>
    </citation>
    <scope>NUCLEOTIDE SEQUENCE [MRNA]</scope>
    <source>
        <strain>White leghorn</strain>
        <tissue>Embryo</tissue>
    </source>
</reference>
<reference key="3">
    <citation type="submission" date="1995-04" db="EMBL/GenBank/DDBJ databases">
        <authorList>
            <person name="Huang J.X."/>
            <person name="Wendler C.C."/>
            <person name="Morrice D.R."/>
            <person name="Burt D.W."/>
            <person name="Runyan R.B."/>
        </authorList>
    </citation>
    <scope>NUCLEOTIDE SEQUENCE [MRNA]</scope>
    <source>
        <tissue>Heart</tissue>
    </source>
</reference>
<organism>
    <name type="scientific">Gallus gallus</name>
    <name type="common">Chicken</name>
    <dbReference type="NCBI Taxonomy" id="9031"/>
    <lineage>
        <taxon>Eukaryota</taxon>
        <taxon>Metazoa</taxon>
        <taxon>Chordata</taxon>
        <taxon>Craniata</taxon>
        <taxon>Vertebrata</taxon>
        <taxon>Euteleostomi</taxon>
        <taxon>Archelosauria</taxon>
        <taxon>Archosauria</taxon>
        <taxon>Dinosauria</taxon>
        <taxon>Saurischia</taxon>
        <taxon>Theropoda</taxon>
        <taxon>Coelurosauria</taxon>
        <taxon>Aves</taxon>
        <taxon>Neognathae</taxon>
        <taxon>Galloanserae</taxon>
        <taxon>Galliformes</taxon>
        <taxon>Phasianidae</taxon>
        <taxon>Phasianinae</taxon>
        <taxon>Gallus</taxon>
    </lineage>
</organism>
<dbReference type="EMBL" id="U67086">
    <property type="protein sequence ID" value="AAC60283.1"/>
    <property type="molecule type" value="mRNA"/>
</dbReference>
<dbReference type="EMBL" id="U25176">
    <property type="protein sequence ID" value="AAA67365.1"/>
    <property type="molecule type" value="mRNA"/>
</dbReference>
<dbReference type="SMR" id="P79777"/>
<dbReference type="STRING" id="9031.ENSGALP00000018703"/>
<dbReference type="GlyGen" id="P79777">
    <property type="glycosylation" value="1 site"/>
</dbReference>
<dbReference type="PaxDb" id="9031-ENSGALP00000018703"/>
<dbReference type="VEuPathDB" id="HostDB:geneid_395782"/>
<dbReference type="eggNOG" id="KOG3585">
    <property type="taxonomic scope" value="Eukaryota"/>
</dbReference>
<dbReference type="InParanoid" id="P79777"/>
<dbReference type="OrthoDB" id="7442607at2759"/>
<dbReference type="PhylomeDB" id="P79777"/>
<dbReference type="Proteomes" id="UP000000539">
    <property type="component" value="Unassembled WGS sequence"/>
</dbReference>
<dbReference type="GO" id="GO:0000785">
    <property type="term" value="C:chromatin"/>
    <property type="evidence" value="ECO:0000318"/>
    <property type="project" value="GO_Central"/>
</dbReference>
<dbReference type="GO" id="GO:0005634">
    <property type="term" value="C:nucleus"/>
    <property type="evidence" value="ECO:0000250"/>
    <property type="project" value="UniProtKB"/>
</dbReference>
<dbReference type="GO" id="GO:0000981">
    <property type="term" value="F:DNA-binding transcription factor activity, RNA polymerase II-specific"/>
    <property type="evidence" value="ECO:0000318"/>
    <property type="project" value="GO_Central"/>
</dbReference>
<dbReference type="GO" id="GO:0051087">
    <property type="term" value="F:protein-folding chaperone binding"/>
    <property type="evidence" value="ECO:0000353"/>
    <property type="project" value="AgBase"/>
</dbReference>
<dbReference type="GO" id="GO:0000978">
    <property type="term" value="F:RNA polymerase II cis-regulatory region sequence-specific DNA binding"/>
    <property type="evidence" value="ECO:0000318"/>
    <property type="project" value="GO_Central"/>
</dbReference>
<dbReference type="GO" id="GO:0001708">
    <property type="term" value="P:cell fate specification"/>
    <property type="evidence" value="ECO:0000318"/>
    <property type="project" value="GO_Central"/>
</dbReference>
<dbReference type="GO" id="GO:0003007">
    <property type="term" value="P:heart morphogenesis"/>
    <property type="evidence" value="ECO:0000318"/>
    <property type="project" value="GO_Central"/>
</dbReference>
<dbReference type="GO" id="GO:0001707">
    <property type="term" value="P:mesoderm formation"/>
    <property type="evidence" value="ECO:0000318"/>
    <property type="project" value="GO_Central"/>
</dbReference>
<dbReference type="GO" id="GO:0045893">
    <property type="term" value="P:positive regulation of DNA-templated transcription"/>
    <property type="evidence" value="ECO:0007669"/>
    <property type="project" value="InterPro"/>
</dbReference>
<dbReference type="GO" id="GO:0006357">
    <property type="term" value="P:regulation of transcription by RNA polymerase II"/>
    <property type="evidence" value="ECO:0000318"/>
    <property type="project" value="GO_Central"/>
</dbReference>
<dbReference type="GO" id="GO:0001756">
    <property type="term" value="P:somitogenesis"/>
    <property type="evidence" value="ECO:0000318"/>
    <property type="project" value="GO_Central"/>
</dbReference>
<dbReference type="CDD" id="cd20192">
    <property type="entry name" value="T-box_TBXT_TBX19-like"/>
    <property type="match status" value="1"/>
</dbReference>
<dbReference type="FunFam" id="2.60.40.820:FF:000002">
    <property type="entry name" value="T-box transcription factor Brachyury"/>
    <property type="match status" value="1"/>
</dbReference>
<dbReference type="Gene3D" id="2.60.40.820">
    <property type="entry name" value="Transcription factor, T-box"/>
    <property type="match status" value="1"/>
</dbReference>
<dbReference type="InterPro" id="IPR008967">
    <property type="entry name" value="p53-like_TF_DNA-bd_sf"/>
</dbReference>
<dbReference type="InterPro" id="IPR046360">
    <property type="entry name" value="T-box_DNA-bd"/>
</dbReference>
<dbReference type="InterPro" id="IPR036960">
    <property type="entry name" value="T-box_sf"/>
</dbReference>
<dbReference type="InterPro" id="IPR002070">
    <property type="entry name" value="TF_Brachyury"/>
</dbReference>
<dbReference type="InterPro" id="IPR001699">
    <property type="entry name" value="TF_T-box"/>
</dbReference>
<dbReference type="InterPro" id="IPR018186">
    <property type="entry name" value="TF_T-box_CS"/>
</dbReference>
<dbReference type="PANTHER" id="PTHR11267">
    <property type="entry name" value="T-BOX PROTEIN-RELATED"/>
    <property type="match status" value="1"/>
</dbReference>
<dbReference type="PANTHER" id="PTHR11267:SF83">
    <property type="entry name" value="T-BOX TRANSCRIPTION FACTOR T"/>
    <property type="match status" value="1"/>
</dbReference>
<dbReference type="Pfam" id="PF00907">
    <property type="entry name" value="T-box"/>
    <property type="match status" value="1"/>
</dbReference>
<dbReference type="PRINTS" id="PR00938">
    <property type="entry name" value="BRACHYURY"/>
</dbReference>
<dbReference type="PRINTS" id="PR00937">
    <property type="entry name" value="TBOX"/>
</dbReference>
<dbReference type="SMART" id="SM00425">
    <property type="entry name" value="TBOX"/>
    <property type="match status" value="1"/>
</dbReference>
<dbReference type="SUPFAM" id="SSF49417">
    <property type="entry name" value="p53-like transcription factors"/>
    <property type="match status" value="1"/>
</dbReference>
<dbReference type="PROSITE" id="PS01283">
    <property type="entry name" value="TBOX_1"/>
    <property type="match status" value="1"/>
</dbReference>
<dbReference type="PROSITE" id="PS01264">
    <property type="entry name" value="TBOX_2"/>
    <property type="match status" value="1"/>
</dbReference>
<dbReference type="PROSITE" id="PS50252">
    <property type="entry name" value="TBOX_3"/>
    <property type="match status" value="1"/>
</dbReference>
<proteinExistence type="evidence at transcript level"/>
<protein>
    <recommendedName>
        <fullName evidence="5">T-box transcription factor T</fullName>
    </recommendedName>
    <alternativeName>
        <fullName evidence="5">Brachyury protein</fullName>
    </alternativeName>
    <alternativeName>
        <fullName>Protein T</fullName>
    </alternativeName>
</protein>
<keyword id="KW-0010">Activator</keyword>
<keyword id="KW-0217">Developmental protein</keyword>
<keyword id="KW-0238">DNA-binding</keyword>
<keyword id="KW-0539">Nucleus</keyword>
<keyword id="KW-1185">Reference proteome</keyword>
<keyword id="KW-0804">Transcription</keyword>
<keyword id="KW-0805">Transcription regulation</keyword>
<sequence>MGSPEDAGKAPAYRVDHLLSAVESELQAGSEKGDPTERELRVALEDGELWLRFKELTNEMIVTKNGRRMFPVLKVSVSGLDPNAMYSFLLDFVAADGHRWKYVNGEWVPGGKPEPQAPSCVYIHPDSPNFGAHWMKAPVSFSKVKLTNKLNGGGQIMLNSLHKYEPRIHIVRVGGPQRMITSHSFPETQFTAVTAYQNEEITALKIKYNPFAKAFLDAKERNDHKDMMEEAGDNQQSGYSQLGSWLIPGAGALCPPANPHSQFGAPLSLSPAHSCERYSPLRNHRSAPYPNPYTHRNNSPTAYTDNSSACLPMLQSHDNWSSLGVPTHTTMLPMSHSTGTATSSSQYPNLWSVSNSTITPAPQSSGMSNGLSSQFLRGSPVHYTALPHPVTATTSTSPLYDGGAPADLPDSQYDASAHTRLASMWTPITPPSM</sequence>
<name>TBXT_CHICK</name>
<accession>P79777</accession>
<accession>Q90654</accession>
<comment type="function">
    <text evidence="1 3">Involved in the transcriptional regulation of genes required for mesoderm formation and differentiation. Binds to a palindromic site (called T site) and activates gene transcription when bound to such a site.</text>
</comment>
<comment type="subunit">
    <text evidence="1 3">Monomer. Binds DNA as a monomer.</text>
</comment>
<comment type="subcellular location">
    <subcellularLocation>
        <location evidence="2">Nucleus</location>
    </subcellularLocation>
</comment>
<comment type="developmental stage">
    <text>First expressed in the posterior epiblast of stage XIII blastoderm, then in the elongating primitive streak, early migrating mesoderm, Hensen node and in the notochord. In later stages, found in tail bud and entire notochord up to stage 26-28.</text>
</comment>
<comment type="induction">
    <text>By FGF-4 and activin.</text>
</comment>
<gene>
    <name evidence="2" type="primary">TBXT</name>
    <name type="synonym">T</name>
</gene>